<reference key="1">
    <citation type="journal article" date="2005" name="J. Bacteriol.">
        <title>Structure and genome organization of AFV2, a novel archaeal lipothrixvirus with unusual terminal and core structures.</title>
        <authorList>
            <person name="Haring M."/>
            <person name="Vestergaard G."/>
            <person name="Brugger K."/>
            <person name="Rachel R."/>
            <person name="Garrett R.A."/>
            <person name="Prangishvili D."/>
        </authorList>
    </citation>
    <scope>NUCLEOTIDE SEQUENCE [GENOMIC DNA]</scope>
</reference>
<gene>
    <name type="ORF">ORF554</name>
</gene>
<proteinExistence type="predicted"/>
<organismHost>
    <name type="scientific">Acidianus sp. F28</name>
    <dbReference type="NCBI Taxonomy" id="315458"/>
</organismHost>
<dbReference type="EMBL" id="AJ854042">
    <property type="protein sequence ID" value="CAH69421.1"/>
    <property type="molecule type" value="Genomic_DNA"/>
</dbReference>
<dbReference type="RefSeq" id="YP_001496959.1">
    <property type="nucleotide sequence ID" value="NC_009884.1"/>
</dbReference>
<dbReference type="KEGG" id="vg:5656063"/>
<dbReference type="Proteomes" id="UP000006364">
    <property type="component" value="Genome"/>
</dbReference>
<name>Y554_AFV2P</name>
<protein>
    <recommendedName>
        <fullName>Uncharacterized protein ORF554</fullName>
    </recommendedName>
</protein>
<accession>Q573D5</accession>
<sequence>MVFLNNCDFYFVLDFYFSHTFLSSLRVYKISMSFITGIEKDITNFFSGASDTFSGVVNFGSNIVNGVQNAVQGVVHSIANIAQGIYNGILSIGSDIVNIFGQIGGAIWHGLVSFATAFGTFFYEAFHIVSSAVYGAFQRVASAFEYVGKWIWGGITHIGDALSAFGNWLYNGFREIGIDLLNLGVTASFIYADIKSFFITIWNGLVVIGEDIANAFKAFASSVESLFNTASSYASNLLNDVMYIPEDASKYVASKVSSVLPRVASYNLFFEEMKSLDRLSETMGWRKTIAPILLKIGSPFIAGFTSLIAETALKSFFPEVTGVSPRARRTVAPPPSSDVVSSLSVPNPFQNSISQFTPPTVSPPPQSSVSLSPSPTFEKYVVGAREEDEELLVELPTVLNKLASPYPNSAIVLDEFTVGGYIVQTTREFISFSSVNNVYVIPYATLKIRKVSEESSATVDFTGGVLVETYLLGIPICPASANNASTSSISGAINDGVNSSVQVCLEIGNVASDSGNFSATAYQGVVAPVIPAISQSSSDNQNVSLSVYQSTSMP</sequence>
<keyword id="KW-1185">Reference proteome</keyword>
<feature type="chain" id="PRO_0000384532" description="Uncharacterized protein ORF554">
    <location>
        <begin position="1"/>
        <end position="554"/>
    </location>
</feature>
<organism>
    <name type="scientific">Acidianus filamentous virus 2 (isolate Italy/Pozzuoli)</name>
    <name type="common">AFV-2</name>
    <dbReference type="NCBI Taxonomy" id="654910"/>
    <lineage>
        <taxon>Viruses</taxon>
        <taxon>Adnaviria</taxon>
        <taxon>Zilligvirae</taxon>
        <taxon>Taleaviricota</taxon>
        <taxon>Tokiviricetes</taxon>
        <taxon>Ligamenvirales</taxon>
        <taxon>Lipothrixviridae</taxon>
        <taxon>Deltalipothrixvirus</taxon>
        <taxon>Acidianus filamentous virus 2</taxon>
    </lineage>
</organism>